<gene>
    <name evidence="1" type="primary">rplF</name>
    <name type="ordered locus">PSPA7_0852</name>
</gene>
<organism>
    <name type="scientific">Pseudomonas paraeruginosa (strain DSM 24068 / PA7)</name>
    <name type="common">Pseudomonas aeruginosa (strain PA7)</name>
    <dbReference type="NCBI Taxonomy" id="381754"/>
    <lineage>
        <taxon>Bacteria</taxon>
        <taxon>Pseudomonadati</taxon>
        <taxon>Pseudomonadota</taxon>
        <taxon>Gammaproteobacteria</taxon>
        <taxon>Pseudomonadales</taxon>
        <taxon>Pseudomonadaceae</taxon>
        <taxon>Pseudomonas</taxon>
        <taxon>Pseudomonas paraeruginosa</taxon>
    </lineage>
</organism>
<accession>A6UZK3</accession>
<proteinExistence type="inferred from homology"/>
<name>RL6_PSEP7</name>
<comment type="function">
    <text evidence="1">This protein binds to the 23S rRNA, and is important in its secondary structure. It is located near the subunit interface in the base of the L7/L12 stalk, and near the tRNA binding site of the peptidyltransferase center.</text>
</comment>
<comment type="subunit">
    <text evidence="1">Part of the 50S ribosomal subunit.</text>
</comment>
<comment type="similarity">
    <text evidence="1">Belongs to the universal ribosomal protein uL6 family.</text>
</comment>
<reference key="1">
    <citation type="submission" date="2007-06" db="EMBL/GenBank/DDBJ databases">
        <authorList>
            <person name="Dodson R.J."/>
            <person name="Harkins D."/>
            <person name="Paulsen I.T."/>
        </authorList>
    </citation>
    <scope>NUCLEOTIDE SEQUENCE [LARGE SCALE GENOMIC DNA]</scope>
    <source>
        <strain>DSM 24068 / PA7</strain>
    </source>
</reference>
<sequence>MSRVAKNPVKLPAGVEIKLAGQQLSIKGAKGALELKVHPSVEVIQDSGELRFAARNGDQQTRAMAGTTRALVNNMVVGVSQGFERKLQLVGVGYKAQAKGQVLSLSLGFSHPVDYELPAGIVAETPSQTDILIKGIDKQLVGQVAAEIRDFRPPEPYKGKGVRYADEVVRRKEAKKK</sequence>
<dbReference type="EMBL" id="CP000744">
    <property type="protein sequence ID" value="ABR83476.1"/>
    <property type="molecule type" value="Genomic_DNA"/>
</dbReference>
<dbReference type="RefSeq" id="WP_003093699.1">
    <property type="nucleotide sequence ID" value="NC_009656.1"/>
</dbReference>
<dbReference type="SMR" id="A6UZK3"/>
<dbReference type="GeneID" id="77219213"/>
<dbReference type="KEGG" id="pap:PSPA7_0852"/>
<dbReference type="HOGENOM" id="CLU_065464_1_2_6"/>
<dbReference type="Proteomes" id="UP000001582">
    <property type="component" value="Chromosome"/>
</dbReference>
<dbReference type="GO" id="GO:0022625">
    <property type="term" value="C:cytosolic large ribosomal subunit"/>
    <property type="evidence" value="ECO:0007669"/>
    <property type="project" value="TreeGrafter"/>
</dbReference>
<dbReference type="GO" id="GO:0019843">
    <property type="term" value="F:rRNA binding"/>
    <property type="evidence" value="ECO:0007669"/>
    <property type="project" value="UniProtKB-UniRule"/>
</dbReference>
<dbReference type="GO" id="GO:0003735">
    <property type="term" value="F:structural constituent of ribosome"/>
    <property type="evidence" value="ECO:0007669"/>
    <property type="project" value="InterPro"/>
</dbReference>
<dbReference type="GO" id="GO:0002181">
    <property type="term" value="P:cytoplasmic translation"/>
    <property type="evidence" value="ECO:0007669"/>
    <property type="project" value="TreeGrafter"/>
</dbReference>
<dbReference type="FunFam" id="3.90.930.12:FF:000001">
    <property type="entry name" value="50S ribosomal protein L6"/>
    <property type="match status" value="1"/>
</dbReference>
<dbReference type="FunFam" id="3.90.930.12:FF:000002">
    <property type="entry name" value="50S ribosomal protein L6"/>
    <property type="match status" value="1"/>
</dbReference>
<dbReference type="Gene3D" id="3.90.930.12">
    <property type="entry name" value="Ribosomal protein L6, alpha-beta domain"/>
    <property type="match status" value="2"/>
</dbReference>
<dbReference type="HAMAP" id="MF_01365_B">
    <property type="entry name" value="Ribosomal_uL6_B"/>
    <property type="match status" value="1"/>
</dbReference>
<dbReference type="InterPro" id="IPR000702">
    <property type="entry name" value="Ribosomal_uL6-like"/>
</dbReference>
<dbReference type="InterPro" id="IPR036789">
    <property type="entry name" value="Ribosomal_uL6-like_a/b-dom_sf"/>
</dbReference>
<dbReference type="InterPro" id="IPR020040">
    <property type="entry name" value="Ribosomal_uL6_a/b-dom"/>
</dbReference>
<dbReference type="InterPro" id="IPR019906">
    <property type="entry name" value="Ribosomal_uL6_bac-type"/>
</dbReference>
<dbReference type="InterPro" id="IPR002358">
    <property type="entry name" value="Ribosomal_uL6_CS"/>
</dbReference>
<dbReference type="NCBIfam" id="TIGR03654">
    <property type="entry name" value="L6_bact"/>
    <property type="match status" value="1"/>
</dbReference>
<dbReference type="PANTHER" id="PTHR11655">
    <property type="entry name" value="60S/50S RIBOSOMAL PROTEIN L6/L9"/>
    <property type="match status" value="1"/>
</dbReference>
<dbReference type="PANTHER" id="PTHR11655:SF14">
    <property type="entry name" value="LARGE RIBOSOMAL SUBUNIT PROTEIN UL6M"/>
    <property type="match status" value="1"/>
</dbReference>
<dbReference type="Pfam" id="PF00347">
    <property type="entry name" value="Ribosomal_L6"/>
    <property type="match status" value="2"/>
</dbReference>
<dbReference type="PIRSF" id="PIRSF002162">
    <property type="entry name" value="Ribosomal_L6"/>
    <property type="match status" value="1"/>
</dbReference>
<dbReference type="PRINTS" id="PR00059">
    <property type="entry name" value="RIBOSOMALL6"/>
</dbReference>
<dbReference type="SUPFAM" id="SSF56053">
    <property type="entry name" value="Ribosomal protein L6"/>
    <property type="match status" value="2"/>
</dbReference>
<dbReference type="PROSITE" id="PS00525">
    <property type="entry name" value="RIBOSOMAL_L6_1"/>
    <property type="match status" value="1"/>
</dbReference>
<evidence type="ECO:0000255" key="1">
    <source>
        <dbReference type="HAMAP-Rule" id="MF_01365"/>
    </source>
</evidence>
<evidence type="ECO:0000305" key="2"/>
<feature type="chain" id="PRO_1000055285" description="Large ribosomal subunit protein uL6">
    <location>
        <begin position="1"/>
        <end position="177"/>
    </location>
</feature>
<protein>
    <recommendedName>
        <fullName evidence="1">Large ribosomal subunit protein uL6</fullName>
    </recommendedName>
    <alternativeName>
        <fullName evidence="2">50S ribosomal protein L6</fullName>
    </alternativeName>
</protein>
<keyword id="KW-0687">Ribonucleoprotein</keyword>
<keyword id="KW-0689">Ribosomal protein</keyword>
<keyword id="KW-0694">RNA-binding</keyword>
<keyword id="KW-0699">rRNA-binding</keyword>